<organism>
    <name type="scientific">Haemophilus influenzae (strain ATCC 51907 / DSM 11121 / KW20 / Rd)</name>
    <dbReference type="NCBI Taxonomy" id="71421"/>
    <lineage>
        <taxon>Bacteria</taxon>
        <taxon>Pseudomonadati</taxon>
        <taxon>Pseudomonadota</taxon>
        <taxon>Gammaproteobacteria</taxon>
        <taxon>Pasteurellales</taxon>
        <taxon>Pasteurellaceae</taxon>
        <taxon>Haemophilus</taxon>
    </lineage>
</organism>
<protein>
    <recommendedName>
        <fullName>DNA polymerase III subunit delta</fullName>
        <ecNumber>2.7.7.7</ecNumber>
    </recommendedName>
</protein>
<accession>P43747</accession>
<proteinExistence type="inferred from homology"/>
<sequence>MNRIFPEQLNHHLAQGLARVYLLQGQDPLLLSETEDTICQVANLQGFDEKNTIQVDSQTDWAQLIESCQSIGLFFSKQILSLNLPENFTALLQKNLQELISVLHKDVLLILQVAKLAKGIEKQTWFITLNQYEPNTILINCQTPTVENLPRWVKNRTKAMGLDADNEAIQQLCYSYENNLLALKQALQLLDLLYPDHKLNYNRVISVVEQSSIFTPFQWIDALLVGKANRAKRILKGLQAEDVQPVILLRTLQRELFTLLELTKPQQRIVTTEKLPIQQIKTEFDRLKIWQNRRPLFLSAIQRLTYQTLYEIIQELANIERLAKQEFSDEVWIKLADLSVKICL</sequence>
<gene>
    <name type="primary">holA</name>
    <name type="ordered locus">HI_0923</name>
</gene>
<evidence type="ECO:0000250" key="1"/>
<evidence type="ECO:0000305" key="2"/>
<name>HOLA_HAEIN</name>
<dbReference type="EC" id="2.7.7.7"/>
<dbReference type="EMBL" id="L42023">
    <property type="protein sequence ID" value="AAC22583.1"/>
    <property type="molecule type" value="Genomic_DNA"/>
</dbReference>
<dbReference type="PIR" id="A64103">
    <property type="entry name" value="A64103"/>
</dbReference>
<dbReference type="RefSeq" id="NP_439083.1">
    <property type="nucleotide sequence ID" value="NC_000907.1"/>
</dbReference>
<dbReference type="SMR" id="P43747"/>
<dbReference type="STRING" id="71421.HI_0923"/>
<dbReference type="EnsemblBacteria" id="AAC22583">
    <property type="protein sequence ID" value="AAC22583"/>
    <property type="gene ID" value="HI_0923"/>
</dbReference>
<dbReference type="KEGG" id="hin:HI_0923"/>
<dbReference type="PATRIC" id="fig|71421.8.peg.964"/>
<dbReference type="eggNOG" id="COG1466">
    <property type="taxonomic scope" value="Bacteria"/>
</dbReference>
<dbReference type="HOGENOM" id="CLU_044694_0_2_6"/>
<dbReference type="OrthoDB" id="9770982at2"/>
<dbReference type="PhylomeDB" id="P43747"/>
<dbReference type="BioCyc" id="HINF71421:G1GJ1-962-MONOMER"/>
<dbReference type="Proteomes" id="UP000000579">
    <property type="component" value="Chromosome"/>
</dbReference>
<dbReference type="GO" id="GO:0009360">
    <property type="term" value="C:DNA polymerase III complex"/>
    <property type="evidence" value="ECO:0000318"/>
    <property type="project" value="GO_Central"/>
</dbReference>
<dbReference type="GO" id="GO:0003677">
    <property type="term" value="F:DNA binding"/>
    <property type="evidence" value="ECO:0007669"/>
    <property type="project" value="InterPro"/>
</dbReference>
<dbReference type="GO" id="GO:0003887">
    <property type="term" value="F:DNA-directed DNA polymerase activity"/>
    <property type="evidence" value="ECO:0007669"/>
    <property type="project" value="UniProtKB-KW"/>
</dbReference>
<dbReference type="GO" id="GO:0006261">
    <property type="term" value="P:DNA-templated DNA replication"/>
    <property type="evidence" value="ECO:0000318"/>
    <property type="project" value="GO_Central"/>
</dbReference>
<dbReference type="CDD" id="cd18138">
    <property type="entry name" value="HLD_clamp_pol_III_delta"/>
    <property type="match status" value="1"/>
</dbReference>
<dbReference type="Gene3D" id="1.10.8.60">
    <property type="match status" value="1"/>
</dbReference>
<dbReference type="Gene3D" id="1.20.272.10">
    <property type="match status" value="1"/>
</dbReference>
<dbReference type="Gene3D" id="3.40.50.300">
    <property type="entry name" value="P-loop containing nucleotide triphosphate hydrolases"/>
    <property type="match status" value="1"/>
</dbReference>
<dbReference type="InterPro" id="IPR008921">
    <property type="entry name" value="DNA_pol3_clamp-load_cplx_C"/>
</dbReference>
<dbReference type="InterPro" id="IPR032780">
    <property type="entry name" value="DNA_pol3_delt_C"/>
</dbReference>
<dbReference type="InterPro" id="IPR010372">
    <property type="entry name" value="DNA_pol3_delta_N"/>
</dbReference>
<dbReference type="InterPro" id="IPR005790">
    <property type="entry name" value="DNA_polIII_delta"/>
</dbReference>
<dbReference type="InterPro" id="IPR027417">
    <property type="entry name" value="P-loop_NTPase"/>
</dbReference>
<dbReference type="NCBIfam" id="TIGR01128">
    <property type="entry name" value="holA"/>
    <property type="match status" value="1"/>
</dbReference>
<dbReference type="PANTHER" id="PTHR34388">
    <property type="entry name" value="DNA POLYMERASE III SUBUNIT DELTA"/>
    <property type="match status" value="1"/>
</dbReference>
<dbReference type="PANTHER" id="PTHR34388:SF1">
    <property type="entry name" value="DNA POLYMERASE III SUBUNIT DELTA"/>
    <property type="match status" value="1"/>
</dbReference>
<dbReference type="Pfam" id="PF14840">
    <property type="entry name" value="DNA_pol3_delt_C"/>
    <property type="match status" value="1"/>
</dbReference>
<dbReference type="Pfam" id="PF06144">
    <property type="entry name" value="DNA_pol3_delta"/>
    <property type="match status" value="1"/>
</dbReference>
<dbReference type="SUPFAM" id="SSF52540">
    <property type="entry name" value="P-loop containing nucleoside triphosphate hydrolases"/>
    <property type="match status" value="1"/>
</dbReference>
<dbReference type="SUPFAM" id="SSF48019">
    <property type="entry name" value="post-AAA+ oligomerization domain-like"/>
    <property type="match status" value="1"/>
</dbReference>
<comment type="function">
    <text evidence="1">DNA polymerase III is a complex, multichain enzyme responsible for most of the replicative synthesis in bacteria. This DNA polymerase also exhibits 3' to 5' exonuclease activity. The delta subunit seems to interact with the gamma subunit to transfer the beta subunit on the DNA (By similarity).</text>
</comment>
<comment type="catalytic activity">
    <reaction>
        <text>DNA(n) + a 2'-deoxyribonucleoside 5'-triphosphate = DNA(n+1) + diphosphate</text>
        <dbReference type="Rhea" id="RHEA:22508"/>
        <dbReference type="Rhea" id="RHEA-COMP:17339"/>
        <dbReference type="Rhea" id="RHEA-COMP:17340"/>
        <dbReference type="ChEBI" id="CHEBI:33019"/>
        <dbReference type="ChEBI" id="CHEBI:61560"/>
        <dbReference type="ChEBI" id="CHEBI:173112"/>
        <dbReference type="EC" id="2.7.7.7"/>
    </reaction>
</comment>
<comment type="subunit">
    <text evidence="1">DNA polymerase III contains a core (composed of alpha, epsilon and theta chains) that associates with a tau subunit. This core dimerizes to form the POLIII' complex. PolIII' associates with the gamma complex (composed of gamma, delta, delta', psi and chi chains) and with the beta chain to form the complete DNA polymerase III complex (By similarity).</text>
</comment>
<comment type="similarity">
    <text evidence="2">Belongs to the DNA polymerase HolA subunit family.</text>
</comment>
<reference key="1">
    <citation type="journal article" date="1995" name="Science">
        <title>Whole-genome random sequencing and assembly of Haemophilus influenzae Rd.</title>
        <authorList>
            <person name="Fleischmann R.D."/>
            <person name="Adams M.D."/>
            <person name="White O."/>
            <person name="Clayton R.A."/>
            <person name="Kirkness E.F."/>
            <person name="Kerlavage A.R."/>
            <person name="Bult C.J."/>
            <person name="Tomb J.-F."/>
            <person name="Dougherty B.A."/>
            <person name="Merrick J.M."/>
            <person name="McKenney K."/>
            <person name="Sutton G.G."/>
            <person name="FitzHugh W."/>
            <person name="Fields C.A."/>
            <person name="Gocayne J.D."/>
            <person name="Scott J.D."/>
            <person name="Shirley R."/>
            <person name="Liu L.-I."/>
            <person name="Glodek A."/>
            <person name="Kelley J.M."/>
            <person name="Weidman J.F."/>
            <person name="Phillips C.A."/>
            <person name="Spriggs T."/>
            <person name="Hedblom E."/>
            <person name="Cotton M.D."/>
            <person name="Utterback T.R."/>
            <person name="Hanna M.C."/>
            <person name="Nguyen D.T."/>
            <person name="Saudek D.M."/>
            <person name="Brandon R.C."/>
            <person name="Fine L.D."/>
            <person name="Fritchman J.L."/>
            <person name="Fuhrmann J.L."/>
            <person name="Geoghagen N.S.M."/>
            <person name="Gnehm C.L."/>
            <person name="McDonald L.A."/>
            <person name="Small K.V."/>
            <person name="Fraser C.M."/>
            <person name="Smith H.O."/>
            <person name="Venter J.C."/>
        </authorList>
    </citation>
    <scope>NUCLEOTIDE SEQUENCE [LARGE SCALE GENOMIC DNA]</scope>
    <source>
        <strain>ATCC 51907 / DSM 11121 / KW20 / Rd</strain>
    </source>
</reference>
<keyword id="KW-0235">DNA replication</keyword>
<keyword id="KW-0239">DNA-directed DNA polymerase</keyword>
<keyword id="KW-0548">Nucleotidyltransferase</keyword>
<keyword id="KW-1185">Reference proteome</keyword>
<keyword id="KW-0808">Transferase</keyword>
<feature type="chain" id="PRO_0000105506" description="DNA polymerase III subunit delta">
    <location>
        <begin position="1"/>
        <end position="344"/>
    </location>
</feature>